<reference key="1">
    <citation type="submission" date="2008-07" db="EMBL/GenBank/DDBJ databases">
        <title>Complete sequence of Geobacter bemidjiensis BEM.</title>
        <authorList>
            <consortium name="US DOE Joint Genome Institute"/>
            <person name="Lucas S."/>
            <person name="Copeland A."/>
            <person name="Lapidus A."/>
            <person name="Glavina del Rio T."/>
            <person name="Dalin E."/>
            <person name="Tice H."/>
            <person name="Bruce D."/>
            <person name="Goodwin L."/>
            <person name="Pitluck S."/>
            <person name="Kiss H."/>
            <person name="Brettin T."/>
            <person name="Detter J.C."/>
            <person name="Han C."/>
            <person name="Kuske C.R."/>
            <person name="Schmutz J."/>
            <person name="Larimer F."/>
            <person name="Land M."/>
            <person name="Hauser L."/>
            <person name="Kyrpides N."/>
            <person name="Lykidis A."/>
            <person name="Lovley D."/>
            <person name="Richardson P."/>
        </authorList>
    </citation>
    <scope>NUCLEOTIDE SEQUENCE [LARGE SCALE GENOMIC DNA]</scope>
    <source>
        <strain>ATCC BAA-1014 / DSM 16622 / JCM 12645 / Bem</strain>
    </source>
</reference>
<organism>
    <name type="scientific">Citrifermentans bemidjiense (strain ATCC BAA-1014 / DSM 16622 / JCM 12645 / Bem)</name>
    <name type="common">Geobacter bemidjiensis</name>
    <dbReference type="NCBI Taxonomy" id="404380"/>
    <lineage>
        <taxon>Bacteria</taxon>
        <taxon>Pseudomonadati</taxon>
        <taxon>Thermodesulfobacteriota</taxon>
        <taxon>Desulfuromonadia</taxon>
        <taxon>Geobacterales</taxon>
        <taxon>Geobacteraceae</taxon>
        <taxon>Citrifermentans</taxon>
    </lineage>
</organism>
<keyword id="KW-0067">ATP-binding</keyword>
<keyword id="KW-0963">Cytoplasm</keyword>
<keyword id="KW-0227">DNA damage</keyword>
<keyword id="KW-0233">DNA recombination</keyword>
<keyword id="KW-0234">DNA repair</keyword>
<keyword id="KW-0238">DNA-binding</keyword>
<keyword id="KW-0547">Nucleotide-binding</keyword>
<keyword id="KW-1185">Reference proteome</keyword>
<keyword id="KW-0742">SOS response</keyword>
<name>RECA_CITBB</name>
<accession>B5ED05</accession>
<comment type="function">
    <text evidence="1">Can catalyze the hydrolysis of ATP in the presence of single-stranded DNA, the ATP-dependent uptake of single-stranded DNA by duplex DNA, and the ATP-dependent hybridization of homologous single-stranded DNAs. It interacts with LexA causing its activation and leading to its autocatalytic cleavage.</text>
</comment>
<comment type="subcellular location">
    <subcellularLocation>
        <location evidence="1">Cytoplasm</location>
    </subcellularLocation>
</comment>
<comment type="similarity">
    <text evidence="1">Belongs to the RecA family.</text>
</comment>
<feature type="chain" id="PRO_1000114336" description="Protein RecA">
    <location>
        <begin position="1"/>
        <end position="338"/>
    </location>
</feature>
<feature type="binding site" evidence="1">
    <location>
        <begin position="68"/>
        <end position="75"/>
    </location>
    <ligand>
        <name>ATP</name>
        <dbReference type="ChEBI" id="CHEBI:30616"/>
    </ligand>
</feature>
<evidence type="ECO:0000255" key="1">
    <source>
        <dbReference type="HAMAP-Rule" id="MF_00268"/>
    </source>
</evidence>
<sequence length="338" mass="36325">MLDKDKAEKALDLAMSQIEKQFGKGAIMRLGNEEALPDIASIPTGSLSLDIALGVGGVPRGRVIEIFGPESSGKTTLALHVISEAQKLGGIAAFVDAEHALDIGYARKLGVKTDDLLVSQPDTGEQALEIAETLVRSGAIDVLVVDSVAALVPKAEIEGDMGDSHMGLQARLMSQALRKLTGIISKSNCCVIFINQIRMKIGVMFGNPETTTGGNALKFYASVRMDIRKIAALKQGNDMIGSRTRVKVVKNKVAPPFKEVEFDILYGEGISKEGDILDLAVERNVVEKSGAWFSYGKERIGQGRENSRLFLKEHPEITAEIREKLVNPQQDAATPGAA</sequence>
<protein>
    <recommendedName>
        <fullName evidence="1">Protein RecA</fullName>
    </recommendedName>
    <alternativeName>
        <fullName evidence="1">Recombinase A</fullName>
    </alternativeName>
</protein>
<proteinExistence type="inferred from homology"/>
<gene>
    <name evidence="1" type="primary">recA</name>
    <name type="ordered locus">Gbem_3630</name>
</gene>
<dbReference type="EMBL" id="CP001124">
    <property type="protein sequence ID" value="ACH40622.1"/>
    <property type="molecule type" value="Genomic_DNA"/>
</dbReference>
<dbReference type="RefSeq" id="WP_012532059.1">
    <property type="nucleotide sequence ID" value="NC_011146.1"/>
</dbReference>
<dbReference type="SMR" id="B5ED05"/>
<dbReference type="STRING" id="404380.Gbem_3630"/>
<dbReference type="KEGG" id="gbm:Gbem_3630"/>
<dbReference type="eggNOG" id="COG0468">
    <property type="taxonomic scope" value="Bacteria"/>
</dbReference>
<dbReference type="HOGENOM" id="CLU_040469_1_2_7"/>
<dbReference type="OrthoDB" id="9776733at2"/>
<dbReference type="Proteomes" id="UP000008825">
    <property type="component" value="Chromosome"/>
</dbReference>
<dbReference type="GO" id="GO:0005829">
    <property type="term" value="C:cytosol"/>
    <property type="evidence" value="ECO:0007669"/>
    <property type="project" value="TreeGrafter"/>
</dbReference>
<dbReference type="GO" id="GO:0005524">
    <property type="term" value="F:ATP binding"/>
    <property type="evidence" value="ECO:0007669"/>
    <property type="project" value="UniProtKB-UniRule"/>
</dbReference>
<dbReference type="GO" id="GO:0016887">
    <property type="term" value="F:ATP hydrolysis activity"/>
    <property type="evidence" value="ECO:0007669"/>
    <property type="project" value="InterPro"/>
</dbReference>
<dbReference type="GO" id="GO:0140664">
    <property type="term" value="F:ATP-dependent DNA damage sensor activity"/>
    <property type="evidence" value="ECO:0007669"/>
    <property type="project" value="InterPro"/>
</dbReference>
<dbReference type="GO" id="GO:0003684">
    <property type="term" value="F:damaged DNA binding"/>
    <property type="evidence" value="ECO:0007669"/>
    <property type="project" value="UniProtKB-UniRule"/>
</dbReference>
<dbReference type="GO" id="GO:0003697">
    <property type="term" value="F:single-stranded DNA binding"/>
    <property type="evidence" value="ECO:0007669"/>
    <property type="project" value="UniProtKB-UniRule"/>
</dbReference>
<dbReference type="GO" id="GO:0006310">
    <property type="term" value="P:DNA recombination"/>
    <property type="evidence" value="ECO:0007669"/>
    <property type="project" value="UniProtKB-UniRule"/>
</dbReference>
<dbReference type="GO" id="GO:0006281">
    <property type="term" value="P:DNA repair"/>
    <property type="evidence" value="ECO:0007669"/>
    <property type="project" value="UniProtKB-UniRule"/>
</dbReference>
<dbReference type="GO" id="GO:0009432">
    <property type="term" value="P:SOS response"/>
    <property type="evidence" value="ECO:0007669"/>
    <property type="project" value="UniProtKB-UniRule"/>
</dbReference>
<dbReference type="CDD" id="cd00983">
    <property type="entry name" value="RecA"/>
    <property type="match status" value="1"/>
</dbReference>
<dbReference type="FunFam" id="3.40.50.300:FF:000087">
    <property type="entry name" value="Recombinase RecA"/>
    <property type="match status" value="1"/>
</dbReference>
<dbReference type="Gene3D" id="3.40.50.300">
    <property type="entry name" value="P-loop containing nucleotide triphosphate hydrolases"/>
    <property type="match status" value="1"/>
</dbReference>
<dbReference type="HAMAP" id="MF_00268">
    <property type="entry name" value="RecA"/>
    <property type="match status" value="1"/>
</dbReference>
<dbReference type="InterPro" id="IPR003593">
    <property type="entry name" value="AAA+_ATPase"/>
</dbReference>
<dbReference type="InterPro" id="IPR013765">
    <property type="entry name" value="DNA_recomb/repair_RecA"/>
</dbReference>
<dbReference type="InterPro" id="IPR020584">
    <property type="entry name" value="DNA_recomb/repair_RecA_CS"/>
</dbReference>
<dbReference type="InterPro" id="IPR027417">
    <property type="entry name" value="P-loop_NTPase"/>
</dbReference>
<dbReference type="InterPro" id="IPR049261">
    <property type="entry name" value="RecA-like_C"/>
</dbReference>
<dbReference type="InterPro" id="IPR049428">
    <property type="entry name" value="RecA-like_N"/>
</dbReference>
<dbReference type="InterPro" id="IPR020588">
    <property type="entry name" value="RecA_ATP-bd"/>
</dbReference>
<dbReference type="InterPro" id="IPR023400">
    <property type="entry name" value="RecA_C_sf"/>
</dbReference>
<dbReference type="InterPro" id="IPR020587">
    <property type="entry name" value="RecA_monomer-monomer_interface"/>
</dbReference>
<dbReference type="NCBIfam" id="TIGR02012">
    <property type="entry name" value="tigrfam_recA"/>
    <property type="match status" value="1"/>
</dbReference>
<dbReference type="PANTHER" id="PTHR45900:SF1">
    <property type="entry name" value="MITOCHONDRIAL DNA REPAIR PROTEIN RECA HOMOLOG-RELATED"/>
    <property type="match status" value="1"/>
</dbReference>
<dbReference type="PANTHER" id="PTHR45900">
    <property type="entry name" value="RECA"/>
    <property type="match status" value="1"/>
</dbReference>
<dbReference type="Pfam" id="PF00154">
    <property type="entry name" value="RecA"/>
    <property type="match status" value="1"/>
</dbReference>
<dbReference type="Pfam" id="PF21096">
    <property type="entry name" value="RecA_C"/>
    <property type="match status" value="1"/>
</dbReference>
<dbReference type="PRINTS" id="PR00142">
    <property type="entry name" value="RECA"/>
</dbReference>
<dbReference type="SMART" id="SM00382">
    <property type="entry name" value="AAA"/>
    <property type="match status" value="1"/>
</dbReference>
<dbReference type="SUPFAM" id="SSF52540">
    <property type="entry name" value="P-loop containing nucleoside triphosphate hydrolases"/>
    <property type="match status" value="1"/>
</dbReference>
<dbReference type="SUPFAM" id="SSF54752">
    <property type="entry name" value="RecA protein, C-terminal domain"/>
    <property type="match status" value="1"/>
</dbReference>
<dbReference type="PROSITE" id="PS00321">
    <property type="entry name" value="RECA_1"/>
    <property type="match status" value="1"/>
</dbReference>
<dbReference type="PROSITE" id="PS50162">
    <property type="entry name" value="RECA_2"/>
    <property type="match status" value="1"/>
</dbReference>
<dbReference type="PROSITE" id="PS50163">
    <property type="entry name" value="RECA_3"/>
    <property type="match status" value="1"/>
</dbReference>